<accession>Q46WM4</accession>
<evidence type="ECO:0000255" key="1">
    <source>
        <dbReference type="HAMAP-Rule" id="MF_00237"/>
    </source>
</evidence>
<gene>
    <name evidence="1" type="primary">tatB</name>
    <name type="ordered locus">Reut_A3099</name>
</gene>
<proteinExistence type="inferred from homology"/>
<organism>
    <name type="scientific">Cupriavidus pinatubonensis (strain JMP 134 / LMG 1197)</name>
    <name type="common">Cupriavidus necator (strain JMP 134)</name>
    <dbReference type="NCBI Taxonomy" id="264198"/>
    <lineage>
        <taxon>Bacteria</taxon>
        <taxon>Pseudomonadati</taxon>
        <taxon>Pseudomonadota</taxon>
        <taxon>Betaproteobacteria</taxon>
        <taxon>Burkholderiales</taxon>
        <taxon>Burkholderiaceae</taxon>
        <taxon>Cupriavidus</taxon>
    </lineage>
</organism>
<reference key="1">
    <citation type="journal article" date="2010" name="PLoS ONE">
        <title>The complete multipartite genome sequence of Cupriavidus necator JMP134, a versatile pollutant degrader.</title>
        <authorList>
            <person name="Lykidis A."/>
            <person name="Perez-Pantoja D."/>
            <person name="Ledger T."/>
            <person name="Mavromatis K."/>
            <person name="Anderson I.J."/>
            <person name="Ivanova N.N."/>
            <person name="Hooper S.D."/>
            <person name="Lapidus A."/>
            <person name="Lucas S."/>
            <person name="Gonzalez B."/>
            <person name="Kyrpides N.C."/>
        </authorList>
    </citation>
    <scope>NUCLEOTIDE SEQUENCE [LARGE SCALE GENOMIC DNA]</scope>
    <source>
        <strain>JMP134 / LMG 1197</strain>
    </source>
</reference>
<keyword id="KW-0997">Cell inner membrane</keyword>
<keyword id="KW-1003">Cell membrane</keyword>
<keyword id="KW-0472">Membrane</keyword>
<keyword id="KW-0653">Protein transport</keyword>
<keyword id="KW-0811">Translocation</keyword>
<keyword id="KW-0812">Transmembrane</keyword>
<keyword id="KW-1133">Transmembrane helix</keyword>
<keyword id="KW-0813">Transport</keyword>
<comment type="function">
    <text evidence="1">Part of the twin-arginine translocation (Tat) system that transports large folded proteins containing a characteristic twin-arginine motif in their signal peptide across membranes. Together with TatC, TatB is part of a receptor directly interacting with Tat signal peptides. TatB may form an oligomeric binding site that transiently accommodates folded Tat precursor proteins before their translocation.</text>
</comment>
<comment type="subunit">
    <text evidence="1">The Tat system comprises two distinct complexes: a TatABC complex, containing multiple copies of TatA, TatB and TatC subunits, and a separate TatA complex, containing only TatA subunits. Substrates initially bind to the TatABC complex, which probably triggers association of the separate TatA complex to form the active translocon.</text>
</comment>
<comment type="subcellular location">
    <subcellularLocation>
        <location evidence="1">Cell inner membrane</location>
        <topology evidence="1">Single-pass membrane protein</topology>
    </subcellularLocation>
</comment>
<comment type="similarity">
    <text evidence="1">Belongs to the TatB family.</text>
</comment>
<name>TATB_CUPPJ</name>
<protein>
    <recommendedName>
        <fullName evidence="1">Sec-independent protein translocase protein TatB</fullName>
    </recommendedName>
</protein>
<feature type="chain" id="PRO_0000301217" description="Sec-independent protein translocase protein TatB">
    <location>
        <begin position="1"/>
        <end position="168"/>
    </location>
</feature>
<feature type="transmembrane region" description="Helical" evidence="1">
    <location>
        <begin position="1"/>
        <end position="21"/>
    </location>
</feature>
<sequence>MIDLGISKLALIGAVALIVIGPERLPRVARTVGALVGRAQRYINDVKAEVSREVELEELRKMRTEFEDAARDVERTIHKEVSEQTQALNEALGGIEPSAESGGGVSDFVPSWHSAHKAHNGRKSWRVKQGARPLWFKRQNNVRVWVQSGAARVKRHRPAAGRARSFFE</sequence>
<dbReference type="EMBL" id="CP000090">
    <property type="protein sequence ID" value="AAZ62459.1"/>
    <property type="molecule type" value="Genomic_DNA"/>
</dbReference>
<dbReference type="SMR" id="Q46WM4"/>
<dbReference type="STRING" id="264198.Reut_A3099"/>
<dbReference type="KEGG" id="reu:Reut_A3099"/>
<dbReference type="eggNOG" id="COG1826">
    <property type="taxonomic scope" value="Bacteria"/>
</dbReference>
<dbReference type="HOGENOM" id="CLU_086034_1_1_4"/>
<dbReference type="OrthoDB" id="9816005at2"/>
<dbReference type="GO" id="GO:0033281">
    <property type="term" value="C:TAT protein transport complex"/>
    <property type="evidence" value="ECO:0007669"/>
    <property type="project" value="UniProtKB-UniRule"/>
</dbReference>
<dbReference type="GO" id="GO:0008320">
    <property type="term" value="F:protein transmembrane transporter activity"/>
    <property type="evidence" value="ECO:0007669"/>
    <property type="project" value="UniProtKB-UniRule"/>
</dbReference>
<dbReference type="GO" id="GO:0043953">
    <property type="term" value="P:protein transport by the Tat complex"/>
    <property type="evidence" value="ECO:0007669"/>
    <property type="project" value="UniProtKB-UniRule"/>
</dbReference>
<dbReference type="Gene3D" id="1.20.5.3310">
    <property type="match status" value="1"/>
</dbReference>
<dbReference type="HAMAP" id="MF_00237">
    <property type="entry name" value="TatB"/>
    <property type="match status" value="1"/>
</dbReference>
<dbReference type="InterPro" id="IPR003369">
    <property type="entry name" value="TatA/B/E"/>
</dbReference>
<dbReference type="InterPro" id="IPR018448">
    <property type="entry name" value="TatB"/>
</dbReference>
<dbReference type="NCBIfam" id="TIGR01410">
    <property type="entry name" value="tatB"/>
    <property type="match status" value="1"/>
</dbReference>
<dbReference type="PANTHER" id="PTHR33162">
    <property type="entry name" value="SEC-INDEPENDENT PROTEIN TRANSLOCASE PROTEIN TATA, CHLOROPLASTIC"/>
    <property type="match status" value="1"/>
</dbReference>
<dbReference type="PANTHER" id="PTHR33162:SF1">
    <property type="entry name" value="SEC-INDEPENDENT PROTEIN TRANSLOCASE PROTEIN TATA, CHLOROPLASTIC"/>
    <property type="match status" value="1"/>
</dbReference>
<dbReference type="Pfam" id="PF02416">
    <property type="entry name" value="TatA_B_E"/>
    <property type="match status" value="1"/>
</dbReference>
<dbReference type="PRINTS" id="PR01506">
    <property type="entry name" value="TATBPROTEIN"/>
</dbReference>